<accession>B4R1Q2</accession>
<feature type="signal peptide" evidence="2">
    <location>
        <begin position="1"/>
        <end position="21"/>
    </location>
</feature>
<feature type="chain" id="PRO_0000354982" description="Protein Turandot B">
    <location>
        <begin position="22"/>
        <end position="139"/>
    </location>
</feature>
<organism>
    <name type="scientific">Drosophila simulans</name>
    <name type="common">Fruit fly</name>
    <dbReference type="NCBI Taxonomy" id="7240"/>
    <lineage>
        <taxon>Eukaryota</taxon>
        <taxon>Metazoa</taxon>
        <taxon>Ecdysozoa</taxon>
        <taxon>Arthropoda</taxon>
        <taxon>Hexapoda</taxon>
        <taxon>Insecta</taxon>
        <taxon>Pterygota</taxon>
        <taxon>Neoptera</taxon>
        <taxon>Endopterygota</taxon>
        <taxon>Diptera</taxon>
        <taxon>Brachycera</taxon>
        <taxon>Muscomorpha</taxon>
        <taxon>Ephydroidea</taxon>
        <taxon>Drosophilidae</taxon>
        <taxon>Drosophila</taxon>
        <taxon>Sophophora</taxon>
    </lineage>
</organism>
<proteinExistence type="inferred from homology"/>
<comment type="function">
    <text evidence="1">A humoral factor that may play a role in stress tolerance.</text>
</comment>
<comment type="subcellular location">
    <subcellularLocation>
        <location evidence="1">Secreted</location>
    </subcellularLocation>
</comment>
<comment type="similarity">
    <text evidence="2">Belongs to the Turandot family.</text>
</comment>
<sequence>MNFKTALICFALLLIGTLCSAYSNQERQRDSRRVAEIMRTSLDDNTKIHRIQELLTIYNRMAPSLRPDERARIDRFISRHTEGIMVDGVPSQGGARKIFKKTLSPAAKSVATGFFTELGASLASLFTSWFPATTTERNH</sequence>
<gene>
    <name evidence="1" type="primary">TotB</name>
    <name type="ORF">GD19384</name>
</gene>
<dbReference type="EMBL" id="CM000364">
    <property type="protein sequence ID" value="EDX12161.1"/>
    <property type="molecule type" value="Genomic_DNA"/>
</dbReference>
<dbReference type="SMR" id="B4R1Q2"/>
<dbReference type="STRING" id="7240.B4R1Q2"/>
<dbReference type="EnsemblMetazoa" id="FBtr0219294">
    <property type="protein sequence ID" value="FBpp0217786"/>
    <property type="gene ID" value="FBgn0190885"/>
</dbReference>
<dbReference type="EnsemblMetazoa" id="XM_002102622.4">
    <property type="protein sequence ID" value="XP_002102658.1"/>
    <property type="gene ID" value="LOC6727269"/>
</dbReference>
<dbReference type="GeneID" id="6727269"/>
<dbReference type="KEGG" id="dsi:Dsimw501_GD19384"/>
<dbReference type="HOGENOM" id="CLU_152780_0_0_1"/>
<dbReference type="OMA" id="CSAYSNQ"/>
<dbReference type="OrthoDB" id="7861285at2759"/>
<dbReference type="PhylomeDB" id="B4R1Q2"/>
<dbReference type="Proteomes" id="UP000000304">
    <property type="component" value="Chromosome 3R"/>
</dbReference>
<dbReference type="GO" id="GO:0005615">
    <property type="term" value="C:extracellular space"/>
    <property type="evidence" value="ECO:0000250"/>
    <property type="project" value="UniProtKB"/>
</dbReference>
<dbReference type="GO" id="GO:0034605">
    <property type="term" value="P:cellular response to heat"/>
    <property type="evidence" value="ECO:0007669"/>
    <property type="project" value="EnsemblMetazoa"/>
</dbReference>
<dbReference type="GO" id="GO:0034644">
    <property type="term" value="P:cellular response to UV"/>
    <property type="evidence" value="ECO:0007669"/>
    <property type="project" value="EnsemblMetazoa"/>
</dbReference>
<dbReference type="GO" id="GO:0045087">
    <property type="term" value="P:innate immune response"/>
    <property type="evidence" value="ECO:0007669"/>
    <property type="project" value="UniProtKB-KW"/>
</dbReference>
<dbReference type="GO" id="GO:0009617">
    <property type="term" value="P:response to bacterium"/>
    <property type="evidence" value="ECO:0007669"/>
    <property type="project" value="EnsemblMetazoa"/>
</dbReference>
<dbReference type="GO" id="GO:0009408">
    <property type="term" value="P:response to heat"/>
    <property type="evidence" value="ECO:0000250"/>
    <property type="project" value="UniProtKB"/>
</dbReference>
<dbReference type="GO" id="GO:0009411">
    <property type="term" value="P:response to UV"/>
    <property type="evidence" value="ECO:0000250"/>
    <property type="project" value="UniProtKB"/>
</dbReference>
<dbReference type="InterPro" id="IPR010825">
    <property type="entry name" value="Turandot"/>
</dbReference>
<dbReference type="Pfam" id="PF07240">
    <property type="entry name" value="Turandot"/>
    <property type="match status" value="1"/>
</dbReference>
<keyword id="KW-0391">Immunity</keyword>
<keyword id="KW-0399">Innate immunity</keyword>
<keyword id="KW-1185">Reference proteome</keyword>
<keyword id="KW-0964">Secreted</keyword>
<keyword id="KW-0732">Signal</keyword>
<evidence type="ECO:0000250" key="1">
    <source>
        <dbReference type="UniProtKB" id="Q9VDH4"/>
    </source>
</evidence>
<evidence type="ECO:0000255" key="2"/>
<evidence type="ECO:0000312" key="3">
    <source>
        <dbReference type="EMBL" id="EDX12161.1"/>
    </source>
</evidence>
<reference evidence="3" key="1">
    <citation type="journal article" date="2007" name="Nature">
        <title>Evolution of genes and genomes on the Drosophila phylogeny.</title>
        <authorList>
            <consortium name="Drosophila 12 genomes consortium"/>
        </authorList>
    </citation>
    <scope>NUCLEOTIDE SEQUENCE [LARGE SCALE GENOMIC DNA]</scope>
</reference>
<name>TOTB_DROSI</name>
<protein>
    <recommendedName>
        <fullName>Protein Turandot B</fullName>
    </recommendedName>
</protein>